<feature type="chain" id="PRO_0000378491" description="Uroporphyrinogen-III C-methyltransferase">
    <location>
        <begin position="1"/>
        <end position="257"/>
    </location>
</feature>
<feature type="binding site" evidence="1">
    <location>
        <position position="11"/>
    </location>
    <ligand>
        <name>S-adenosyl-L-homocysteine</name>
        <dbReference type="ChEBI" id="CHEBI:57856"/>
    </ligand>
</feature>
<feature type="binding site" evidence="1">
    <location>
        <begin position="87"/>
        <end position="89"/>
    </location>
    <ligand>
        <name>S-adenosyl-L-homocysteine</name>
        <dbReference type="ChEBI" id="CHEBI:57856"/>
    </ligand>
</feature>
<feature type="binding site" evidence="1">
    <location>
        <begin position="117"/>
        <end position="118"/>
    </location>
    <ligand>
        <name>S-adenosyl-L-homocysteine</name>
        <dbReference type="ChEBI" id="CHEBI:57856"/>
    </ligand>
</feature>
<feature type="binding site" evidence="1">
    <location>
        <position position="170"/>
    </location>
    <ligand>
        <name>S-adenosyl-L-homocysteine</name>
        <dbReference type="ChEBI" id="CHEBI:57856"/>
    </ligand>
</feature>
<organism>
    <name type="scientific">Bacillus subtilis (strain 168)</name>
    <dbReference type="NCBI Taxonomy" id="224308"/>
    <lineage>
        <taxon>Bacteria</taxon>
        <taxon>Bacillati</taxon>
        <taxon>Bacillota</taxon>
        <taxon>Bacilli</taxon>
        <taxon>Bacillales</taxon>
        <taxon>Bacillaceae</taxon>
        <taxon>Bacillus</taxon>
    </lineage>
</organism>
<name>SUMT_BACSU</name>
<gene>
    <name type="primary">sumT</name>
    <name type="synonym">ylnD</name>
    <name type="ordered locus">BSU15610</name>
</gene>
<evidence type="ECO:0000250" key="1">
    <source>
        <dbReference type="UniProtKB" id="P21631"/>
    </source>
</evidence>
<evidence type="ECO:0000250" key="2">
    <source>
        <dbReference type="UniProtKB" id="P29928"/>
    </source>
</evidence>
<evidence type="ECO:0000269" key="3">
    <source>
    </source>
</evidence>
<evidence type="ECO:0000305" key="4"/>
<reference key="1">
    <citation type="submission" date="1997-10" db="EMBL/GenBank/DDBJ databases">
        <title>Cloning and sequencing 8 Kbp of DNA from Bacillus subtilis downstream of the pyr operon.</title>
        <authorList>
            <person name="Foulger D."/>
            <person name="Errington J."/>
        </authorList>
    </citation>
    <scope>NUCLEOTIDE SEQUENCE [GENOMIC DNA]</scope>
    <source>
        <strain>168</strain>
    </source>
</reference>
<reference key="2">
    <citation type="journal article" date="1997" name="Nature">
        <title>The complete genome sequence of the Gram-positive bacterium Bacillus subtilis.</title>
        <authorList>
            <person name="Kunst F."/>
            <person name="Ogasawara N."/>
            <person name="Moszer I."/>
            <person name="Albertini A.M."/>
            <person name="Alloni G."/>
            <person name="Azevedo V."/>
            <person name="Bertero M.G."/>
            <person name="Bessieres P."/>
            <person name="Bolotin A."/>
            <person name="Borchert S."/>
            <person name="Borriss R."/>
            <person name="Boursier L."/>
            <person name="Brans A."/>
            <person name="Braun M."/>
            <person name="Brignell S.C."/>
            <person name="Bron S."/>
            <person name="Brouillet S."/>
            <person name="Bruschi C.V."/>
            <person name="Caldwell B."/>
            <person name="Capuano V."/>
            <person name="Carter N.M."/>
            <person name="Choi S.-K."/>
            <person name="Codani J.-J."/>
            <person name="Connerton I.F."/>
            <person name="Cummings N.J."/>
            <person name="Daniel R.A."/>
            <person name="Denizot F."/>
            <person name="Devine K.M."/>
            <person name="Duesterhoeft A."/>
            <person name="Ehrlich S.D."/>
            <person name="Emmerson P.T."/>
            <person name="Entian K.-D."/>
            <person name="Errington J."/>
            <person name="Fabret C."/>
            <person name="Ferrari E."/>
            <person name="Foulger D."/>
            <person name="Fritz C."/>
            <person name="Fujita M."/>
            <person name="Fujita Y."/>
            <person name="Fuma S."/>
            <person name="Galizzi A."/>
            <person name="Galleron N."/>
            <person name="Ghim S.-Y."/>
            <person name="Glaser P."/>
            <person name="Goffeau A."/>
            <person name="Golightly E.J."/>
            <person name="Grandi G."/>
            <person name="Guiseppi G."/>
            <person name="Guy B.J."/>
            <person name="Haga K."/>
            <person name="Haiech J."/>
            <person name="Harwood C.R."/>
            <person name="Henaut A."/>
            <person name="Hilbert H."/>
            <person name="Holsappel S."/>
            <person name="Hosono S."/>
            <person name="Hullo M.-F."/>
            <person name="Itaya M."/>
            <person name="Jones L.-M."/>
            <person name="Joris B."/>
            <person name="Karamata D."/>
            <person name="Kasahara Y."/>
            <person name="Klaerr-Blanchard M."/>
            <person name="Klein C."/>
            <person name="Kobayashi Y."/>
            <person name="Koetter P."/>
            <person name="Koningstein G."/>
            <person name="Krogh S."/>
            <person name="Kumano M."/>
            <person name="Kurita K."/>
            <person name="Lapidus A."/>
            <person name="Lardinois S."/>
            <person name="Lauber J."/>
            <person name="Lazarevic V."/>
            <person name="Lee S.-M."/>
            <person name="Levine A."/>
            <person name="Liu H."/>
            <person name="Masuda S."/>
            <person name="Mauel C."/>
            <person name="Medigue C."/>
            <person name="Medina N."/>
            <person name="Mellado R.P."/>
            <person name="Mizuno M."/>
            <person name="Moestl D."/>
            <person name="Nakai S."/>
            <person name="Noback M."/>
            <person name="Noone D."/>
            <person name="O'Reilly M."/>
            <person name="Ogawa K."/>
            <person name="Ogiwara A."/>
            <person name="Oudega B."/>
            <person name="Park S.-H."/>
            <person name="Parro V."/>
            <person name="Pohl T.M."/>
            <person name="Portetelle D."/>
            <person name="Porwollik S."/>
            <person name="Prescott A.M."/>
            <person name="Presecan E."/>
            <person name="Pujic P."/>
            <person name="Purnelle B."/>
            <person name="Rapoport G."/>
            <person name="Rey M."/>
            <person name="Reynolds S."/>
            <person name="Rieger M."/>
            <person name="Rivolta C."/>
            <person name="Rocha E."/>
            <person name="Roche B."/>
            <person name="Rose M."/>
            <person name="Sadaie Y."/>
            <person name="Sato T."/>
            <person name="Scanlan E."/>
            <person name="Schleich S."/>
            <person name="Schroeter R."/>
            <person name="Scoffone F."/>
            <person name="Sekiguchi J."/>
            <person name="Sekowska A."/>
            <person name="Seror S.J."/>
            <person name="Serror P."/>
            <person name="Shin B.-S."/>
            <person name="Soldo B."/>
            <person name="Sorokin A."/>
            <person name="Tacconi E."/>
            <person name="Takagi T."/>
            <person name="Takahashi H."/>
            <person name="Takemaru K."/>
            <person name="Takeuchi M."/>
            <person name="Tamakoshi A."/>
            <person name="Tanaka T."/>
            <person name="Terpstra P."/>
            <person name="Tognoni A."/>
            <person name="Tosato V."/>
            <person name="Uchiyama S."/>
            <person name="Vandenbol M."/>
            <person name="Vannier F."/>
            <person name="Vassarotti A."/>
            <person name="Viari A."/>
            <person name="Wambutt R."/>
            <person name="Wedler E."/>
            <person name="Wedler H."/>
            <person name="Weitzenegger T."/>
            <person name="Winters P."/>
            <person name="Wipat A."/>
            <person name="Yamamoto H."/>
            <person name="Yamane K."/>
            <person name="Yasumoto K."/>
            <person name="Yata K."/>
            <person name="Yoshida K."/>
            <person name="Yoshikawa H.-F."/>
            <person name="Zumstein E."/>
            <person name="Yoshikawa H."/>
            <person name="Danchin A."/>
        </authorList>
    </citation>
    <scope>NUCLEOTIDE SEQUENCE [LARGE SCALE GENOMIC DNA]</scope>
    <source>
        <strain>168</strain>
    </source>
</reference>
<reference key="3">
    <citation type="journal article" date="2000" name="J. Bacteriol.">
        <title>Transcriptional control of the sulfur-regulated cysH operon, containing genes involved in L-cysteine biosynthesis in Bacillus subtilis.</title>
        <authorList>
            <person name="Mansilla M.C."/>
            <person name="Albanesi D."/>
            <person name="de Mendoza D."/>
        </authorList>
    </citation>
    <scope>INDUCTION</scope>
    <source>
        <strain>168 / JH642</strain>
    </source>
</reference>
<sequence length="257" mass="28516">MGKVYIVGAGPGDPDLLTIKALKAIEKADVILYDRLVNKEILQYAKEQADLIYCGKLPDFHTMKQETINRFLVKYAQKGKMVVRLKGGDPFVFGRGGEEAECLSENGIPFEIIPGITSGIAAAAYAGIPVTHRDAGSNVAFVTGHYKKEEDFEEKWKALATGIDTLVIYMGIKNVQQIERKLLENGRDGSTPAAFIHWGTTDKQKSVFCTVDTLSETVIKENITNPSLIVIGNVVNYHYKLEWFESELKKQDLSEAL</sequence>
<proteinExistence type="evidence at transcript level"/>
<accession>O34744</accession>
<accession>Q796I5</accession>
<comment type="function">
    <text evidence="2">Catalyzes the two successive C-2 and C-7 methylation reactions involved in the conversion of uroporphyrinogen III to precorrin-2 via the intermediate formation of precorrin-1. It is a step in the biosynthesis of both cobalamin (vitamin B12) and siroheme.</text>
</comment>
<comment type="catalytic activity">
    <reaction evidence="2">
        <text>uroporphyrinogen III + 2 S-adenosyl-L-methionine = precorrin-2 + 2 S-adenosyl-L-homocysteine + H(+)</text>
        <dbReference type="Rhea" id="RHEA:32459"/>
        <dbReference type="ChEBI" id="CHEBI:15378"/>
        <dbReference type="ChEBI" id="CHEBI:57308"/>
        <dbReference type="ChEBI" id="CHEBI:57856"/>
        <dbReference type="ChEBI" id="CHEBI:58827"/>
        <dbReference type="ChEBI" id="CHEBI:59789"/>
        <dbReference type="EC" id="2.1.1.107"/>
    </reaction>
    <physiologicalReaction direction="left-to-right" evidence="2">
        <dbReference type="Rhea" id="RHEA:32460"/>
    </physiologicalReaction>
</comment>
<comment type="pathway">
    <text evidence="2">Cofactor biosynthesis; adenosylcobalamin biosynthesis; precorrin-2 from uroporphyrinogen III: step 1/1.</text>
</comment>
<comment type="pathway">
    <text evidence="2">Porphyrin-containing compound metabolism; siroheme biosynthesis; precorrin-2 from uroporphyrinogen III: step 1/1.</text>
</comment>
<comment type="induction">
    <text evidence="3">Up-regulated by sulfur starvation and repressed by cysteine. Also induced by O-acetyl-L-serine (OAS), a direct precursor of cysteine, maybe via inactivation of a putative transcriptional repressor of the cysH operon whose activity is controlled by the intracellular levels of OAS.</text>
</comment>
<comment type="similarity">
    <text evidence="4">Belongs to the precorrin methyltransferase family.</text>
</comment>
<dbReference type="EC" id="2.1.1.107" evidence="2"/>
<dbReference type="EMBL" id="AJ000974">
    <property type="protein sequence ID" value="CAA04413.1"/>
    <property type="molecule type" value="Genomic_DNA"/>
</dbReference>
<dbReference type="EMBL" id="AL009126">
    <property type="protein sequence ID" value="CAB13435.1"/>
    <property type="molecule type" value="Genomic_DNA"/>
</dbReference>
<dbReference type="PIR" id="D69877">
    <property type="entry name" value="D69877"/>
</dbReference>
<dbReference type="RefSeq" id="NP_389444.1">
    <property type="nucleotide sequence ID" value="NC_000964.3"/>
</dbReference>
<dbReference type="SMR" id="O34744"/>
<dbReference type="FunCoup" id="O34744">
    <property type="interactions" value="512"/>
</dbReference>
<dbReference type="STRING" id="224308.BSU15610"/>
<dbReference type="PaxDb" id="224308-BSU15610"/>
<dbReference type="EnsemblBacteria" id="CAB13435">
    <property type="protein sequence ID" value="CAB13435"/>
    <property type="gene ID" value="BSU_15610"/>
</dbReference>
<dbReference type="GeneID" id="936712"/>
<dbReference type="KEGG" id="bsu:BSU15610"/>
<dbReference type="PATRIC" id="fig|224308.179.peg.1701"/>
<dbReference type="eggNOG" id="COG0007">
    <property type="taxonomic scope" value="Bacteria"/>
</dbReference>
<dbReference type="InParanoid" id="O34744"/>
<dbReference type="OrthoDB" id="9815856at2"/>
<dbReference type="PhylomeDB" id="O34744"/>
<dbReference type="BioCyc" id="BSUB:BSU15610-MONOMER"/>
<dbReference type="UniPathway" id="UPA00148">
    <property type="reaction ID" value="UER00211"/>
</dbReference>
<dbReference type="UniPathway" id="UPA00262">
    <property type="reaction ID" value="UER00211"/>
</dbReference>
<dbReference type="Proteomes" id="UP000001570">
    <property type="component" value="Chromosome"/>
</dbReference>
<dbReference type="GO" id="GO:0004851">
    <property type="term" value="F:uroporphyrin-III C-methyltransferase activity"/>
    <property type="evidence" value="ECO:0000318"/>
    <property type="project" value="GO_Central"/>
</dbReference>
<dbReference type="GO" id="GO:0009236">
    <property type="term" value="P:cobalamin biosynthetic process"/>
    <property type="evidence" value="ECO:0007669"/>
    <property type="project" value="UniProtKB-UniPathway"/>
</dbReference>
<dbReference type="GO" id="GO:0032259">
    <property type="term" value="P:methylation"/>
    <property type="evidence" value="ECO:0007669"/>
    <property type="project" value="UniProtKB-KW"/>
</dbReference>
<dbReference type="GO" id="GO:0019354">
    <property type="term" value="P:siroheme biosynthetic process"/>
    <property type="evidence" value="ECO:0000318"/>
    <property type="project" value="GO_Central"/>
</dbReference>
<dbReference type="CDD" id="cd11642">
    <property type="entry name" value="SUMT"/>
    <property type="match status" value="1"/>
</dbReference>
<dbReference type="FunFam" id="3.30.950.10:FF:000001">
    <property type="entry name" value="Siroheme synthase"/>
    <property type="match status" value="1"/>
</dbReference>
<dbReference type="FunFam" id="3.40.1010.10:FF:000001">
    <property type="entry name" value="Siroheme synthase"/>
    <property type="match status" value="1"/>
</dbReference>
<dbReference type="Gene3D" id="3.40.1010.10">
    <property type="entry name" value="Cobalt-precorrin-4 Transmethylase, Domain 1"/>
    <property type="match status" value="1"/>
</dbReference>
<dbReference type="Gene3D" id="3.30.950.10">
    <property type="entry name" value="Methyltransferase, Cobalt-precorrin-4 Transmethylase, Domain 2"/>
    <property type="match status" value="1"/>
</dbReference>
<dbReference type="InterPro" id="IPR000878">
    <property type="entry name" value="4pyrrol_Mease"/>
</dbReference>
<dbReference type="InterPro" id="IPR035996">
    <property type="entry name" value="4pyrrol_Methylase_sf"/>
</dbReference>
<dbReference type="InterPro" id="IPR014777">
    <property type="entry name" value="4pyrrole_Mease_sub1"/>
</dbReference>
<dbReference type="InterPro" id="IPR014776">
    <property type="entry name" value="4pyrrole_Mease_sub2"/>
</dbReference>
<dbReference type="InterPro" id="IPR006366">
    <property type="entry name" value="CobA/CysG_C"/>
</dbReference>
<dbReference type="InterPro" id="IPR050161">
    <property type="entry name" value="Siro_Cobalamin_biosynth"/>
</dbReference>
<dbReference type="InterPro" id="IPR003043">
    <property type="entry name" value="Uropor_MeTrfase_CS"/>
</dbReference>
<dbReference type="NCBIfam" id="TIGR01469">
    <property type="entry name" value="cobA_cysG_Cterm"/>
    <property type="match status" value="1"/>
</dbReference>
<dbReference type="NCBIfam" id="NF004790">
    <property type="entry name" value="PRK06136.1"/>
    <property type="match status" value="1"/>
</dbReference>
<dbReference type="PANTHER" id="PTHR45790:SF3">
    <property type="entry name" value="S-ADENOSYL-L-METHIONINE-DEPENDENT UROPORPHYRINOGEN III METHYLTRANSFERASE, CHLOROPLASTIC"/>
    <property type="match status" value="1"/>
</dbReference>
<dbReference type="PANTHER" id="PTHR45790">
    <property type="entry name" value="SIROHEME SYNTHASE-RELATED"/>
    <property type="match status" value="1"/>
</dbReference>
<dbReference type="Pfam" id="PF00590">
    <property type="entry name" value="TP_methylase"/>
    <property type="match status" value="1"/>
</dbReference>
<dbReference type="SUPFAM" id="SSF53790">
    <property type="entry name" value="Tetrapyrrole methylase"/>
    <property type="match status" value="1"/>
</dbReference>
<dbReference type="PROSITE" id="PS00839">
    <property type="entry name" value="SUMT_1"/>
    <property type="match status" value="1"/>
</dbReference>
<dbReference type="PROSITE" id="PS00840">
    <property type="entry name" value="SUMT_2"/>
    <property type="match status" value="1"/>
</dbReference>
<keyword id="KW-0169">Cobalamin biosynthesis</keyword>
<keyword id="KW-0489">Methyltransferase</keyword>
<keyword id="KW-0627">Porphyrin biosynthesis</keyword>
<keyword id="KW-1185">Reference proteome</keyword>
<keyword id="KW-0949">S-adenosyl-L-methionine</keyword>
<keyword id="KW-0808">Transferase</keyword>
<protein>
    <recommendedName>
        <fullName>Uroporphyrinogen-III C-methyltransferase</fullName>
        <shortName>Urogen III methylase</shortName>
        <ecNumber evidence="2">2.1.1.107</ecNumber>
    </recommendedName>
    <alternativeName>
        <fullName>S-adenosyl-L-methionine:uroporphyrinogen III methyltransferase</fullName>
        <shortName>SUMT</shortName>
    </alternativeName>
    <alternativeName>
        <fullName>Uroporphyrinogen III methylase</fullName>
        <shortName>UROM</shortName>
    </alternativeName>
</protein>